<accession>P59524</accession>
<reference key="1">
    <citation type="journal article" date="2003" name="Proc. Natl. Acad. Sci. U.S.A.">
        <title>Reductive genome evolution in Buchnera aphidicola.</title>
        <authorList>
            <person name="van Ham R.C.H.J."/>
            <person name="Kamerbeek J."/>
            <person name="Palacios C."/>
            <person name="Rausell C."/>
            <person name="Abascal F."/>
            <person name="Bastolla U."/>
            <person name="Fernandez J.M."/>
            <person name="Jimenez L."/>
            <person name="Postigo M."/>
            <person name="Silva F.J."/>
            <person name="Tamames J."/>
            <person name="Viguera E."/>
            <person name="Latorre A."/>
            <person name="Valencia A."/>
            <person name="Moran F."/>
            <person name="Moya A."/>
        </authorList>
    </citation>
    <scope>NUCLEOTIDE SEQUENCE [LARGE SCALE GENOMIC DNA]</scope>
    <source>
        <strain>Bp</strain>
    </source>
</reference>
<gene>
    <name evidence="1" type="primary">rsmA</name>
    <name evidence="1" type="synonym">ksgA</name>
    <name type="ordered locus">bbp_131</name>
</gene>
<feature type="chain" id="PRO_0000101501" description="Ribosomal RNA small subunit methyltransferase A">
    <location>
        <begin position="1"/>
        <end position="260"/>
    </location>
</feature>
<feature type="binding site" evidence="1">
    <location>
        <position position="16"/>
    </location>
    <ligand>
        <name>S-adenosyl-L-methionine</name>
        <dbReference type="ChEBI" id="CHEBI:59789"/>
    </ligand>
</feature>
<feature type="binding site" evidence="1">
    <location>
        <position position="18"/>
    </location>
    <ligand>
        <name>S-adenosyl-L-methionine</name>
        <dbReference type="ChEBI" id="CHEBI:59789"/>
    </ligand>
</feature>
<feature type="binding site" evidence="1">
    <location>
        <position position="43"/>
    </location>
    <ligand>
        <name>S-adenosyl-L-methionine</name>
        <dbReference type="ChEBI" id="CHEBI:59789"/>
    </ligand>
</feature>
<feature type="binding site" evidence="1">
    <location>
        <position position="64"/>
    </location>
    <ligand>
        <name>S-adenosyl-L-methionine</name>
        <dbReference type="ChEBI" id="CHEBI:59789"/>
    </ligand>
</feature>
<feature type="binding site" evidence="1">
    <location>
        <position position="86"/>
    </location>
    <ligand>
        <name>S-adenosyl-L-methionine</name>
        <dbReference type="ChEBI" id="CHEBI:59789"/>
    </ligand>
</feature>
<feature type="binding site" evidence="1">
    <location>
        <position position="108"/>
    </location>
    <ligand>
        <name>S-adenosyl-L-methionine</name>
        <dbReference type="ChEBI" id="CHEBI:59789"/>
    </ligand>
</feature>
<sequence length="260" mass="29903">MVKKNTFFANKNLGQNFLVDSEVINRIINVINPKSHDFMIEIGPGLGALTYPICKILHKLFVIEHDNNLGTRLLKDISNIEVFVEDVLKFNFLNLINNSFKSVRIIGNLPYNISIPILFYLFKFHNNIIDMNFMFQKEVASKLLAIPGTKSYSRLSIIAQYYCDIDFLFDVVAQSFYPIPKVTSSFVRLVPRKVFNLYVRDINQLSNVTALAFQQRRKIVKNSLSSLFNDDALRKLGIDPLLRAENLSVKQYCLLSNHVC</sequence>
<name>RSMA_BUCBP</name>
<proteinExistence type="inferred from homology"/>
<organism>
    <name type="scientific">Buchnera aphidicola subsp. Baizongia pistaciae (strain Bp)</name>
    <dbReference type="NCBI Taxonomy" id="224915"/>
    <lineage>
        <taxon>Bacteria</taxon>
        <taxon>Pseudomonadati</taxon>
        <taxon>Pseudomonadota</taxon>
        <taxon>Gammaproteobacteria</taxon>
        <taxon>Enterobacterales</taxon>
        <taxon>Erwiniaceae</taxon>
        <taxon>Buchnera</taxon>
    </lineage>
</organism>
<dbReference type="EC" id="2.1.1.182" evidence="1"/>
<dbReference type="EMBL" id="AE016826">
    <property type="protein sequence ID" value="AAO26865.1"/>
    <property type="molecule type" value="Genomic_DNA"/>
</dbReference>
<dbReference type="RefSeq" id="WP_011091266.1">
    <property type="nucleotide sequence ID" value="NC_004545.1"/>
</dbReference>
<dbReference type="SMR" id="P59524"/>
<dbReference type="STRING" id="224915.bbp_131"/>
<dbReference type="KEGG" id="bab:bbp_131"/>
<dbReference type="eggNOG" id="COG0030">
    <property type="taxonomic scope" value="Bacteria"/>
</dbReference>
<dbReference type="HOGENOM" id="CLU_041220_0_1_6"/>
<dbReference type="OrthoDB" id="9814755at2"/>
<dbReference type="Proteomes" id="UP000000601">
    <property type="component" value="Chromosome"/>
</dbReference>
<dbReference type="GO" id="GO:0005829">
    <property type="term" value="C:cytosol"/>
    <property type="evidence" value="ECO:0007669"/>
    <property type="project" value="TreeGrafter"/>
</dbReference>
<dbReference type="GO" id="GO:0052908">
    <property type="term" value="F:16S rRNA (adenine(1518)-N(6)/adenine(1519)-N(6))-dimethyltransferase activity"/>
    <property type="evidence" value="ECO:0007669"/>
    <property type="project" value="UniProtKB-EC"/>
</dbReference>
<dbReference type="GO" id="GO:0003723">
    <property type="term" value="F:RNA binding"/>
    <property type="evidence" value="ECO:0007669"/>
    <property type="project" value="UniProtKB-KW"/>
</dbReference>
<dbReference type="FunFam" id="1.10.8.100:FF:000001">
    <property type="entry name" value="Ribosomal RNA small subunit methyltransferase A"/>
    <property type="match status" value="1"/>
</dbReference>
<dbReference type="Gene3D" id="1.10.8.100">
    <property type="entry name" value="Ribosomal RNA adenine dimethylase-like, domain 2"/>
    <property type="match status" value="1"/>
</dbReference>
<dbReference type="Gene3D" id="3.40.50.150">
    <property type="entry name" value="Vaccinia Virus protein VP39"/>
    <property type="match status" value="1"/>
</dbReference>
<dbReference type="HAMAP" id="MF_00607">
    <property type="entry name" value="16SrRNA_methyltr_A"/>
    <property type="match status" value="1"/>
</dbReference>
<dbReference type="InterPro" id="IPR001737">
    <property type="entry name" value="KsgA/Erm"/>
</dbReference>
<dbReference type="InterPro" id="IPR023165">
    <property type="entry name" value="rRNA_Ade_diMease-like_C"/>
</dbReference>
<dbReference type="InterPro" id="IPR020596">
    <property type="entry name" value="rRNA_Ade_Mease_Trfase_CS"/>
</dbReference>
<dbReference type="InterPro" id="IPR020598">
    <property type="entry name" value="rRNA_Ade_methylase_Trfase_N"/>
</dbReference>
<dbReference type="InterPro" id="IPR011530">
    <property type="entry name" value="rRNA_adenine_dimethylase"/>
</dbReference>
<dbReference type="InterPro" id="IPR029063">
    <property type="entry name" value="SAM-dependent_MTases_sf"/>
</dbReference>
<dbReference type="NCBIfam" id="TIGR00755">
    <property type="entry name" value="ksgA"/>
    <property type="match status" value="1"/>
</dbReference>
<dbReference type="PANTHER" id="PTHR11727">
    <property type="entry name" value="DIMETHYLADENOSINE TRANSFERASE"/>
    <property type="match status" value="1"/>
</dbReference>
<dbReference type="PANTHER" id="PTHR11727:SF7">
    <property type="entry name" value="DIMETHYLADENOSINE TRANSFERASE-RELATED"/>
    <property type="match status" value="1"/>
</dbReference>
<dbReference type="Pfam" id="PF00398">
    <property type="entry name" value="RrnaAD"/>
    <property type="match status" value="1"/>
</dbReference>
<dbReference type="SMART" id="SM00650">
    <property type="entry name" value="rADc"/>
    <property type="match status" value="1"/>
</dbReference>
<dbReference type="SUPFAM" id="SSF53335">
    <property type="entry name" value="S-adenosyl-L-methionine-dependent methyltransferases"/>
    <property type="match status" value="1"/>
</dbReference>
<dbReference type="PROSITE" id="PS01131">
    <property type="entry name" value="RRNA_A_DIMETH"/>
    <property type="match status" value="1"/>
</dbReference>
<dbReference type="PROSITE" id="PS51689">
    <property type="entry name" value="SAM_RNA_A_N6_MT"/>
    <property type="match status" value="1"/>
</dbReference>
<keyword id="KW-0963">Cytoplasm</keyword>
<keyword id="KW-0489">Methyltransferase</keyword>
<keyword id="KW-1185">Reference proteome</keyword>
<keyword id="KW-0694">RNA-binding</keyword>
<keyword id="KW-0698">rRNA processing</keyword>
<keyword id="KW-0949">S-adenosyl-L-methionine</keyword>
<keyword id="KW-0808">Transferase</keyword>
<comment type="function">
    <text evidence="1">Specifically dimethylates two adjacent adenosines (A1518 and A1519) in the loop of a conserved hairpin near the 3'-end of 16S rRNA in the 30S particle. May play a critical role in biogenesis of 30S subunits.</text>
</comment>
<comment type="catalytic activity">
    <reaction evidence="1">
        <text>adenosine(1518)/adenosine(1519) in 16S rRNA + 4 S-adenosyl-L-methionine = N(6)-dimethyladenosine(1518)/N(6)-dimethyladenosine(1519) in 16S rRNA + 4 S-adenosyl-L-homocysteine + 4 H(+)</text>
        <dbReference type="Rhea" id="RHEA:19609"/>
        <dbReference type="Rhea" id="RHEA-COMP:10232"/>
        <dbReference type="Rhea" id="RHEA-COMP:10233"/>
        <dbReference type="ChEBI" id="CHEBI:15378"/>
        <dbReference type="ChEBI" id="CHEBI:57856"/>
        <dbReference type="ChEBI" id="CHEBI:59789"/>
        <dbReference type="ChEBI" id="CHEBI:74411"/>
        <dbReference type="ChEBI" id="CHEBI:74493"/>
        <dbReference type="EC" id="2.1.1.182"/>
    </reaction>
</comment>
<comment type="subcellular location">
    <subcellularLocation>
        <location evidence="1">Cytoplasm</location>
    </subcellularLocation>
</comment>
<comment type="similarity">
    <text evidence="1">Belongs to the class I-like SAM-binding methyltransferase superfamily. rRNA adenine N(6)-methyltransferase family. RsmA subfamily.</text>
</comment>
<protein>
    <recommendedName>
        <fullName evidence="1">Ribosomal RNA small subunit methyltransferase A</fullName>
        <ecNumber evidence="1">2.1.1.182</ecNumber>
    </recommendedName>
    <alternativeName>
        <fullName evidence="1">16S rRNA (adenine(1518)-N(6)/adenine(1519)-N(6))-dimethyltransferase</fullName>
    </alternativeName>
    <alternativeName>
        <fullName evidence="1">16S rRNA dimethyladenosine transferase</fullName>
    </alternativeName>
    <alternativeName>
        <fullName evidence="1">16S rRNA dimethylase</fullName>
    </alternativeName>
    <alternativeName>
        <fullName evidence="1">S-adenosylmethionine-6-N', N'-adenosyl(rRNA) dimethyltransferase</fullName>
    </alternativeName>
</protein>
<evidence type="ECO:0000255" key="1">
    <source>
        <dbReference type="HAMAP-Rule" id="MF_00607"/>
    </source>
</evidence>